<protein>
    <recommendedName>
        <fullName evidence="1">Kynurenine formamidase</fullName>
        <shortName evidence="1">KFA</shortName>
        <shortName evidence="1">KFase</shortName>
        <ecNumber evidence="1">3.5.1.9</ecNumber>
    </recommendedName>
    <alternativeName>
        <fullName evidence="1">Arylformamidase</fullName>
    </alternativeName>
    <alternativeName>
        <fullName evidence="1">N-formylkynurenine formamidase</fullName>
        <shortName evidence="1">FKF</shortName>
    </alternativeName>
</protein>
<feature type="chain" id="PRO_0000362122" description="Kynurenine formamidase">
    <location>
        <begin position="1"/>
        <end position="209"/>
    </location>
</feature>
<feature type="active site" description="Proton donor/acceptor" evidence="1">
    <location>
        <position position="59"/>
    </location>
</feature>
<feature type="binding site" evidence="1">
    <location>
        <position position="19"/>
    </location>
    <ligand>
        <name>substrate</name>
    </ligand>
</feature>
<feature type="binding site" evidence="1">
    <location>
        <position position="49"/>
    </location>
    <ligand>
        <name>Zn(2+)</name>
        <dbReference type="ChEBI" id="CHEBI:29105"/>
        <label>1</label>
    </ligand>
</feature>
<feature type="binding site" evidence="1">
    <location>
        <position position="53"/>
    </location>
    <ligand>
        <name>Zn(2+)</name>
        <dbReference type="ChEBI" id="CHEBI:29105"/>
        <label>1</label>
    </ligand>
</feature>
<feature type="binding site" evidence="1">
    <location>
        <position position="55"/>
    </location>
    <ligand>
        <name>Zn(2+)</name>
        <dbReference type="ChEBI" id="CHEBI:29105"/>
        <label>1</label>
    </ligand>
</feature>
<feature type="binding site" evidence="1">
    <location>
        <position position="55"/>
    </location>
    <ligand>
        <name>Zn(2+)</name>
        <dbReference type="ChEBI" id="CHEBI:29105"/>
        <label>2</label>
    </ligand>
</feature>
<feature type="binding site" evidence="1">
    <location>
        <position position="160"/>
    </location>
    <ligand>
        <name>Zn(2+)</name>
        <dbReference type="ChEBI" id="CHEBI:29105"/>
        <label>2</label>
    </ligand>
</feature>
<feature type="binding site" evidence="1">
    <location>
        <position position="172"/>
    </location>
    <ligand>
        <name>Zn(2+)</name>
        <dbReference type="ChEBI" id="CHEBI:29105"/>
        <label>1</label>
    </ligand>
</feature>
<feature type="binding site" evidence="1">
    <location>
        <position position="172"/>
    </location>
    <ligand>
        <name>Zn(2+)</name>
        <dbReference type="ChEBI" id="CHEBI:29105"/>
        <label>2</label>
    </ligand>
</feature>
<sequence length="209" mass="22311">MTRRLWDISPAVQAASPVFPGDTAYSQQWCATIGPGCPVNVSAITLSPHVGAHADAPLHYDADGASIGNVDLDAFLGPCRVIHAIGKGPLVEWEHIAHAVEHLPARVLVRTYGRAPTTWDQELAAYAPATVERLADLGVKLIGIDTASIDPASSKSLDSHQVIRRRGLRVLENLVLDEVAEGDYELIALPLKLVEADASPVRAVLRALA</sequence>
<reference key="1">
    <citation type="submission" date="2007-11" db="EMBL/GenBank/DDBJ databases">
        <title>Complete sequence of Delftia acidovorans DSM 14801 / SPH-1.</title>
        <authorList>
            <person name="Copeland A."/>
            <person name="Lucas S."/>
            <person name="Lapidus A."/>
            <person name="Barry K."/>
            <person name="Glavina del Rio T."/>
            <person name="Dalin E."/>
            <person name="Tice H."/>
            <person name="Pitluck S."/>
            <person name="Lowry S."/>
            <person name="Clum A."/>
            <person name="Schmutz J."/>
            <person name="Larimer F."/>
            <person name="Land M."/>
            <person name="Hauser L."/>
            <person name="Kyrpides N."/>
            <person name="Kim E."/>
            <person name="Schleheck D."/>
            <person name="Richardson P."/>
        </authorList>
    </citation>
    <scope>NUCLEOTIDE SEQUENCE [LARGE SCALE GENOMIC DNA]</scope>
    <source>
        <strain>DSM 14801 / SPH-1</strain>
    </source>
</reference>
<proteinExistence type="inferred from homology"/>
<evidence type="ECO:0000255" key="1">
    <source>
        <dbReference type="HAMAP-Rule" id="MF_01969"/>
    </source>
</evidence>
<accession>A9BVE1</accession>
<dbReference type="EC" id="3.5.1.9" evidence="1"/>
<dbReference type="EMBL" id="CP000884">
    <property type="protein sequence ID" value="ABX34805.1"/>
    <property type="molecule type" value="Genomic_DNA"/>
</dbReference>
<dbReference type="RefSeq" id="WP_012204088.1">
    <property type="nucleotide sequence ID" value="NC_010002.1"/>
</dbReference>
<dbReference type="SMR" id="A9BVE1"/>
<dbReference type="STRING" id="398578.Daci_2165"/>
<dbReference type="GeneID" id="24115255"/>
<dbReference type="KEGG" id="dac:Daci_2165"/>
<dbReference type="eggNOG" id="COG1878">
    <property type="taxonomic scope" value="Bacteria"/>
</dbReference>
<dbReference type="HOGENOM" id="CLU_030671_3_1_4"/>
<dbReference type="UniPathway" id="UPA00333">
    <property type="reaction ID" value="UER00454"/>
</dbReference>
<dbReference type="Proteomes" id="UP000000784">
    <property type="component" value="Chromosome"/>
</dbReference>
<dbReference type="GO" id="GO:0004061">
    <property type="term" value="F:arylformamidase activity"/>
    <property type="evidence" value="ECO:0000250"/>
    <property type="project" value="UniProtKB"/>
</dbReference>
<dbReference type="GO" id="GO:0004328">
    <property type="term" value="F:formamidase activity"/>
    <property type="evidence" value="ECO:0007669"/>
    <property type="project" value="InterPro"/>
</dbReference>
<dbReference type="GO" id="GO:0008270">
    <property type="term" value="F:zinc ion binding"/>
    <property type="evidence" value="ECO:0007669"/>
    <property type="project" value="UniProtKB-UniRule"/>
</dbReference>
<dbReference type="GO" id="GO:0043420">
    <property type="term" value="P:anthranilate metabolic process"/>
    <property type="evidence" value="ECO:0000250"/>
    <property type="project" value="UniProtKB"/>
</dbReference>
<dbReference type="GO" id="GO:0019441">
    <property type="term" value="P:L-tryptophan catabolic process to kynurenine"/>
    <property type="evidence" value="ECO:0000250"/>
    <property type="project" value="UniProtKB"/>
</dbReference>
<dbReference type="FunFam" id="3.50.30.50:FF:000001">
    <property type="entry name" value="Kynurenine formamidase"/>
    <property type="match status" value="1"/>
</dbReference>
<dbReference type="Gene3D" id="3.50.30.50">
    <property type="entry name" value="Putative cyclase"/>
    <property type="match status" value="1"/>
</dbReference>
<dbReference type="HAMAP" id="MF_01969">
    <property type="entry name" value="KynB"/>
    <property type="match status" value="1"/>
</dbReference>
<dbReference type="InterPro" id="IPR007325">
    <property type="entry name" value="KFase/CYL"/>
</dbReference>
<dbReference type="InterPro" id="IPR037175">
    <property type="entry name" value="KFase_sf"/>
</dbReference>
<dbReference type="InterPro" id="IPR017484">
    <property type="entry name" value="Kynurenine_formamidase_bac"/>
</dbReference>
<dbReference type="NCBIfam" id="TIGR03035">
    <property type="entry name" value="trp_arylform"/>
    <property type="match status" value="1"/>
</dbReference>
<dbReference type="PANTHER" id="PTHR31118">
    <property type="entry name" value="CYCLASE-LIKE PROTEIN 2"/>
    <property type="match status" value="1"/>
</dbReference>
<dbReference type="PANTHER" id="PTHR31118:SF32">
    <property type="entry name" value="KYNURENINE FORMAMIDASE"/>
    <property type="match status" value="1"/>
</dbReference>
<dbReference type="Pfam" id="PF04199">
    <property type="entry name" value="Cyclase"/>
    <property type="match status" value="1"/>
</dbReference>
<dbReference type="SUPFAM" id="SSF102198">
    <property type="entry name" value="Putative cyclase"/>
    <property type="match status" value="1"/>
</dbReference>
<comment type="function">
    <text evidence="1">Catalyzes the hydrolysis of N-formyl-L-kynurenine to L-kynurenine, the second step in the kynurenine pathway of tryptophan degradation.</text>
</comment>
<comment type="catalytic activity">
    <reaction evidence="1">
        <text>N-formyl-L-kynurenine + H2O = L-kynurenine + formate + H(+)</text>
        <dbReference type="Rhea" id="RHEA:13009"/>
        <dbReference type="ChEBI" id="CHEBI:15377"/>
        <dbReference type="ChEBI" id="CHEBI:15378"/>
        <dbReference type="ChEBI" id="CHEBI:15740"/>
        <dbReference type="ChEBI" id="CHEBI:57959"/>
        <dbReference type="ChEBI" id="CHEBI:58629"/>
        <dbReference type="EC" id="3.5.1.9"/>
    </reaction>
</comment>
<comment type="cofactor">
    <cofactor evidence="1">
        <name>Zn(2+)</name>
        <dbReference type="ChEBI" id="CHEBI:29105"/>
    </cofactor>
    <text evidence="1">Binds 2 zinc ions per subunit.</text>
</comment>
<comment type="pathway">
    <text evidence="1">Amino-acid degradation; L-tryptophan degradation via kynurenine pathway; L-kynurenine from L-tryptophan: step 2/2.</text>
</comment>
<comment type="subunit">
    <text evidence="1">Homodimer.</text>
</comment>
<comment type="similarity">
    <text evidence="1">Belongs to the Cyclase 1 superfamily. KynB family.</text>
</comment>
<keyword id="KW-0378">Hydrolase</keyword>
<keyword id="KW-0479">Metal-binding</keyword>
<keyword id="KW-1185">Reference proteome</keyword>
<keyword id="KW-0823">Tryptophan catabolism</keyword>
<keyword id="KW-0862">Zinc</keyword>
<organism>
    <name type="scientific">Delftia acidovorans (strain DSM 14801 / SPH-1)</name>
    <dbReference type="NCBI Taxonomy" id="398578"/>
    <lineage>
        <taxon>Bacteria</taxon>
        <taxon>Pseudomonadati</taxon>
        <taxon>Pseudomonadota</taxon>
        <taxon>Betaproteobacteria</taxon>
        <taxon>Burkholderiales</taxon>
        <taxon>Comamonadaceae</taxon>
        <taxon>Delftia</taxon>
    </lineage>
</organism>
<gene>
    <name evidence="1" type="primary">kynB</name>
    <name type="ordered locus">Daci_2165</name>
</gene>
<name>KYNB_DELAS</name>